<evidence type="ECO:0000256" key="1">
    <source>
        <dbReference type="SAM" id="MobiDB-lite"/>
    </source>
</evidence>
<evidence type="ECO:0000269" key="2">
    <source>
    </source>
</evidence>
<evidence type="ECO:0000269" key="3">
    <source>
    </source>
</evidence>
<evidence type="ECO:0000269" key="4">
    <source>
    </source>
</evidence>
<evidence type="ECO:0000269" key="5">
    <source>
    </source>
</evidence>
<evidence type="ECO:0000303" key="6">
    <source>
    </source>
</evidence>
<evidence type="ECO:0000303" key="7">
    <source>
    </source>
</evidence>
<evidence type="ECO:0000305" key="8"/>
<evidence type="ECO:0000305" key="9">
    <source>
    </source>
</evidence>
<evidence type="ECO:0007744" key="10">
    <source>
    </source>
</evidence>
<evidence type="ECO:0007744" key="11">
    <source>
    </source>
</evidence>
<evidence type="ECO:0007744" key="12">
    <source>
    </source>
</evidence>
<evidence type="ECO:0007829" key="13">
    <source>
        <dbReference type="PDB" id="2VPV"/>
    </source>
</evidence>
<evidence type="ECO:0007829" key="14">
    <source>
        <dbReference type="PDB" id="7ON1"/>
    </source>
</evidence>
<sequence length="549" mass="62473">MDYMKLGLKSRKTGIDVKQDIPKDEYSMENIDDFFKDDETSLISMRRKSRRKSSLFLPSTLNGDTKNVLPPFLQSYKSQDDEVVQSPSGKGDGSRRSSLLSHQSNFLSPANDFEPIEEEPEQEENDIRGNDFATPITQKLSKPTYKRKYSTRYSLDTSESPSVRLTPDRITNKNVYSDVPDLVADEDDDDRVNTSLNTSDNALLEDELEDDGFIPESEEDGDYIESDSSLDSGSDSASDSDGDNTYQEVEEEAEVNTNDNEDDYIRRQASDVVRTDSIIDRNGLRKSTRVKVAPLQYWRNEKIVYKRKSNKPVLDIDKIVTYDESEDEEEILAAQRRKKQKKKPTPTRPYNYVPTGRPRGRPKKDPNAKENLIPEDPNEDIIERIESGGIENGEWLKHGILEANVKISDTKEETKDEIIAFAPNLSQTEQVKDTKDENFALEIMFDKHKEYFASGILKLPAISGQKKLSNSFRTYITFHVIQGIVEVTVCKNKFLSVKGSTFQIPAFNEYAIANRGNDEAKMFFVQVTVSEDANDDNDKELDSTFDTFG</sequence>
<proteinExistence type="evidence at protein level"/>
<accession>P35201</accession>
<accession>D6VXJ9</accession>
<organism>
    <name type="scientific">Saccharomyces cerevisiae (strain ATCC 204508 / S288c)</name>
    <name type="common">Baker's yeast</name>
    <dbReference type="NCBI Taxonomy" id="559292"/>
    <lineage>
        <taxon>Eukaryota</taxon>
        <taxon>Fungi</taxon>
        <taxon>Dikarya</taxon>
        <taxon>Ascomycota</taxon>
        <taxon>Saccharomycotina</taxon>
        <taxon>Saccharomycetes</taxon>
        <taxon>Saccharomycetales</taxon>
        <taxon>Saccharomycetaceae</taxon>
        <taxon>Saccharomyces</taxon>
    </lineage>
</organism>
<protein>
    <recommendedName>
        <fullName evidence="8">Inner kinetochore subunit MIF2</fullName>
    </recommendedName>
    <alternativeName>
        <fullName evidence="6">CENP-C homolog</fullName>
    </alternativeName>
    <alternativeName>
        <fullName evidence="8">Constitutive centromere-associated network protein MIF2</fullName>
    </alternativeName>
    <alternativeName>
        <fullName evidence="7">Mitotic fidelity of chromosome transmission protein 2</fullName>
    </alternativeName>
</protein>
<reference key="1">
    <citation type="journal article" date="1993" name="J. Cell Biol.">
        <title>MIF2 is required for mitotic spindle integrity during anaphase spindle elongation in Saccharomyces cerevisiae.</title>
        <authorList>
            <person name="Brown M.T."/>
            <person name="Goetsch L."/>
            <person name="Hartwell L.H."/>
        </authorList>
    </citation>
    <scope>NUCLEOTIDE SEQUENCE [GENOMIC DNA]</scope>
    <scope>FUNCTION</scope>
</reference>
<reference key="2">
    <citation type="journal article" date="1994" name="Nature">
        <title>Complete DNA sequence of yeast chromosome XI.</title>
        <authorList>
            <person name="Dujon B."/>
            <person name="Alexandraki D."/>
            <person name="Andre B."/>
            <person name="Ansorge W."/>
            <person name="Baladron V."/>
            <person name="Ballesta J.P.G."/>
            <person name="Banrevi A."/>
            <person name="Bolle P.-A."/>
            <person name="Bolotin-Fukuhara M."/>
            <person name="Bossier P."/>
            <person name="Bou G."/>
            <person name="Boyer J."/>
            <person name="Buitrago M.J."/>
            <person name="Cheret G."/>
            <person name="Colleaux L."/>
            <person name="Daignan-Fornier B."/>
            <person name="del Rey F."/>
            <person name="Dion C."/>
            <person name="Domdey H."/>
            <person name="Duesterhoeft A."/>
            <person name="Duesterhus S."/>
            <person name="Entian K.-D."/>
            <person name="Erfle H."/>
            <person name="Esteban P.F."/>
            <person name="Feldmann H."/>
            <person name="Fernandes L."/>
            <person name="Fobo G.M."/>
            <person name="Fritz C."/>
            <person name="Fukuhara H."/>
            <person name="Gabel C."/>
            <person name="Gaillon L."/>
            <person name="Garcia-Cantalejo J.M."/>
            <person name="Garcia-Ramirez J.J."/>
            <person name="Gent M.E."/>
            <person name="Ghazvini M."/>
            <person name="Goffeau A."/>
            <person name="Gonzalez A."/>
            <person name="Grothues D."/>
            <person name="Guerreiro P."/>
            <person name="Hegemann J.H."/>
            <person name="Hewitt N."/>
            <person name="Hilger F."/>
            <person name="Hollenberg C.P."/>
            <person name="Horaitis O."/>
            <person name="Indge K.J."/>
            <person name="Jacquier A."/>
            <person name="James C.M."/>
            <person name="Jauniaux J.-C."/>
            <person name="Jimenez A."/>
            <person name="Keuchel H."/>
            <person name="Kirchrath L."/>
            <person name="Kleine K."/>
            <person name="Koetter P."/>
            <person name="Legrain P."/>
            <person name="Liebl S."/>
            <person name="Louis E.J."/>
            <person name="Maia e Silva A."/>
            <person name="Marck C."/>
            <person name="Monnier A.-L."/>
            <person name="Moestl D."/>
            <person name="Mueller S."/>
            <person name="Obermaier B."/>
            <person name="Oliver S.G."/>
            <person name="Pallier C."/>
            <person name="Pascolo S."/>
            <person name="Pfeiffer F."/>
            <person name="Philippsen P."/>
            <person name="Planta R.J."/>
            <person name="Pohl F.M."/>
            <person name="Pohl T.M."/>
            <person name="Poehlmann R."/>
            <person name="Portetelle D."/>
            <person name="Purnelle B."/>
            <person name="Puzos V."/>
            <person name="Ramezani Rad M."/>
            <person name="Rasmussen S.W."/>
            <person name="Remacha M.A."/>
            <person name="Revuelta J.L."/>
            <person name="Richard G.-F."/>
            <person name="Rieger M."/>
            <person name="Rodrigues-Pousada C."/>
            <person name="Rose M."/>
            <person name="Rupp T."/>
            <person name="Santos M.A."/>
            <person name="Schwager C."/>
            <person name="Sensen C."/>
            <person name="Skala J."/>
            <person name="Soares H."/>
            <person name="Sor F."/>
            <person name="Stegemann J."/>
            <person name="Tettelin H."/>
            <person name="Thierry A."/>
            <person name="Tzermia M."/>
            <person name="Urrestarazu L.A."/>
            <person name="van Dyck L."/>
            <person name="van Vliet-Reedijk J.C."/>
            <person name="Valens M."/>
            <person name="Vandenbol M."/>
            <person name="Vilela C."/>
            <person name="Vissers S."/>
            <person name="von Wettstein D."/>
            <person name="Voss H."/>
            <person name="Wiemann S."/>
            <person name="Xu G."/>
            <person name="Zimmermann J."/>
            <person name="Haasemann M."/>
            <person name="Becker I."/>
            <person name="Mewes H.-W."/>
        </authorList>
    </citation>
    <scope>NUCLEOTIDE SEQUENCE [LARGE SCALE GENOMIC DNA]</scope>
    <source>
        <strain>ATCC 204508 / S288c</strain>
    </source>
</reference>
<reference key="3">
    <citation type="journal article" date="2014" name="G3 (Bethesda)">
        <title>The reference genome sequence of Saccharomyces cerevisiae: Then and now.</title>
        <authorList>
            <person name="Engel S.R."/>
            <person name="Dietrich F.S."/>
            <person name="Fisk D.G."/>
            <person name="Binkley G."/>
            <person name="Balakrishnan R."/>
            <person name="Costanzo M.C."/>
            <person name="Dwight S.S."/>
            <person name="Hitz B.C."/>
            <person name="Karra K."/>
            <person name="Nash R.S."/>
            <person name="Weng S."/>
            <person name="Wong E.D."/>
            <person name="Lloyd P."/>
            <person name="Skrzypek M.S."/>
            <person name="Miyasato S.R."/>
            <person name="Simison M."/>
            <person name="Cherry J.M."/>
        </authorList>
    </citation>
    <scope>GENOME REANNOTATION</scope>
    <source>
        <strain>ATCC 204508 / S288c</strain>
    </source>
</reference>
<reference key="4">
    <citation type="journal article" date="1995" name="Mol. Biol. Cell">
        <title>Evidence that the MIF2 gene of Saccharomyces cerevisiae encodes a centromere protein with homology to the mammalian centromere protein CENP-C.</title>
        <authorList>
            <person name="Meluh P.B."/>
            <person name="Koshland D."/>
        </authorList>
    </citation>
    <scope>CHARACTERIZATION</scope>
</reference>
<reference key="5">
    <citation type="journal article" date="2003" name="Nature">
        <title>Global analysis of protein expression in yeast.</title>
        <authorList>
            <person name="Ghaemmaghami S."/>
            <person name="Huh W.-K."/>
            <person name="Bower K."/>
            <person name="Howson R.W."/>
            <person name="Belle A."/>
            <person name="Dephoure N."/>
            <person name="O'Shea E.K."/>
            <person name="Weissman J.S."/>
        </authorList>
    </citation>
    <scope>LEVEL OF PROTEIN EXPRESSION [LARGE SCALE ANALYSIS]</scope>
</reference>
<reference key="6">
    <citation type="journal article" date="2007" name="J. Proteome Res.">
        <title>Large-scale phosphorylation analysis of alpha-factor-arrested Saccharomyces cerevisiae.</title>
        <authorList>
            <person name="Li X."/>
            <person name="Gerber S.A."/>
            <person name="Rudner A.D."/>
            <person name="Beausoleil S.A."/>
            <person name="Haas W."/>
            <person name="Villen J."/>
            <person name="Elias J.E."/>
            <person name="Gygi S.P."/>
        </authorList>
    </citation>
    <scope>PHOSPHORYLATION [LARGE SCALE ANALYSIS] AT SER-325</scope>
    <scope>IDENTIFICATION BY MASS SPECTROMETRY [LARGE SCALE ANALYSIS]</scope>
    <source>
        <strain>ADR376</strain>
    </source>
</reference>
<reference key="7">
    <citation type="journal article" date="2008" name="Mol. Cell. Proteomics">
        <title>A multidimensional chromatography technology for in-depth phosphoproteome analysis.</title>
        <authorList>
            <person name="Albuquerque C.P."/>
            <person name="Smolka M.B."/>
            <person name="Payne S.H."/>
            <person name="Bafna V."/>
            <person name="Eng J."/>
            <person name="Zhou H."/>
        </authorList>
    </citation>
    <scope>PHOSPHORYLATION [LARGE SCALE ANALYSIS] AT SER-325</scope>
    <scope>IDENTIFICATION BY MASS SPECTROMETRY [LARGE SCALE ANALYSIS]</scope>
</reference>
<reference key="8">
    <citation type="journal article" date="2009" name="Science">
        <title>Global analysis of Cdk1 substrate phosphorylation sites provides insights into evolution.</title>
        <authorList>
            <person name="Holt L.J."/>
            <person name="Tuch B.B."/>
            <person name="Villen J."/>
            <person name="Johnson A.D."/>
            <person name="Gygi S.P."/>
            <person name="Morgan D.O."/>
        </authorList>
    </citation>
    <scope>PHOSPHORYLATION [LARGE SCALE ANALYSIS] AT SER-325</scope>
    <scope>IDENTIFICATION BY MASS SPECTROMETRY [LARGE SCALE ANALYSIS]</scope>
</reference>
<reference key="9">
    <citation type="journal article" date="2012" name="Nat. Cell Biol.">
        <title>CENP-T proteins are conserved centromere receptors of the Ndc80 complex.</title>
        <authorList>
            <person name="Schleiffer A."/>
            <person name="Maier M."/>
            <person name="Litos G."/>
            <person name="Lampert F."/>
            <person name="Hornung P."/>
            <person name="Mechtler K."/>
            <person name="Westermann S."/>
        </authorList>
    </citation>
    <scope>IDENTIFICATION IN CCAN</scope>
    <scope>SUBUNIT</scope>
</reference>
<reference key="10">
    <citation type="journal article" date="2012" name="Proc. Natl. Acad. Sci. U.S.A.">
        <title>N-terminal acetylome analyses and functional insights of the N-terminal acetyltransferase NatB.</title>
        <authorList>
            <person name="Van Damme P."/>
            <person name="Lasa M."/>
            <person name="Polevoda B."/>
            <person name="Gazquez C."/>
            <person name="Elosegui-Artola A."/>
            <person name="Kim D.S."/>
            <person name="De Juan-Pardo E."/>
            <person name="Demeyer K."/>
            <person name="Hole K."/>
            <person name="Larrea E."/>
            <person name="Timmerman E."/>
            <person name="Prieto J."/>
            <person name="Arnesen T."/>
            <person name="Sherman F."/>
            <person name="Gevaert K."/>
            <person name="Aldabe R."/>
        </authorList>
    </citation>
    <scope>IDENTIFICATION BY MASS SPECTROMETRY [LARGE SCALE ANALYSIS]</scope>
</reference>
<reference key="11">
    <citation type="journal article" date="2008" name="Mol. Biol. Cell">
        <title>Structural and functional dissection of Mif2p, a conserved DNA-binding kinetochore protein.</title>
        <authorList>
            <person name="Cohen R.L."/>
            <person name="Espelin C.W."/>
            <person name="De Wulf P."/>
            <person name="Sorger P.K."/>
            <person name="Harrison S.C."/>
            <person name="Simons K.T."/>
        </authorList>
    </citation>
    <scope>X-RAY CRYSTALLOGRAPHY (2.70 ANGSTROMS) OF 365-530</scope>
</reference>
<comment type="function">
    <text evidence="3 4 5">Component of the kinetochore, a multiprotein complex that assembles on centromeric DNA and attaches chromosomes to spindle microtubules, mediating chromosome segregation and sister chromatid segregation during meiosis and mitosis. Component of the inner kinetochore constitutive centromere-associated network (CCAN), which serves as a structural platform for outer kinetochore assembly (PubMed:22561346, PubMed:7579695, PubMed:8408221).</text>
</comment>
<comment type="subunit">
    <text evidence="3 4">Component of the inner kinetochore constitutive centromere-associated network (CCAN) (also known as central kinetochore CTF19 complex in yeast), which is composed of at least AME1, CHL4, CNN1, CTF3, CTF19, IML3, MCM16, MCM21, MCM22, MHF1, MHF2, MIF2, NKP1, NKP2, OKP1 and WIP1 (PubMed:22561346). Interacts with CBF1 (PubMed:7579695).</text>
</comment>
<comment type="subcellular location">
    <subcellularLocation>
        <location>Nucleus</location>
    </subcellularLocation>
    <subcellularLocation>
        <location>Chromosome</location>
        <location>Centromere</location>
    </subcellularLocation>
    <subcellularLocation>
        <location evidence="9">Chromosome</location>
        <location evidence="9">Centromere</location>
        <location evidence="9">Kinetochore</location>
    </subcellularLocation>
</comment>
<comment type="miscellaneous">
    <text evidence="2">Present with 465 molecules/cell in log phase SD medium.</text>
</comment>
<comment type="similarity">
    <text evidence="8">Belongs to the CENP-C/MIF2 family.</text>
</comment>
<name>CENPC_YEAST</name>
<feature type="chain" id="PRO_0000096486" description="Inner kinetochore subunit MIF2">
    <location>
        <begin position="1"/>
        <end position="549"/>
    </location>
</feature>
<feature type="DNA-binding region" description="A.T hook">
    <location>
        <begin position="356"/>
        <end position="364"/>
    </location>
</feature>
<feature type="region of interest" description="Disordered" evidence="1">
    <location>
        <begin position="47"/>
        <end position="275"/>
    </location>
</feature>
<feature type="region of interest" description="Disordered" evidence="1">
    <location>
        <begin position="335"/>
        <end position="374"/>
    </location>
</feature>
<feature type="compositionally biased region" description="Polar residues" evidence="1">
    <location>
        <begin position="56"/>
        <end position="65"/>
    </location>
</feature>
<feature type="compositionally biased region" description="Polar residues" evidence="1">
    <location>
        <begin position="96"/>
        <end position="108"/>
    </location>
</feature>
<feature type="compositionally biased region" description="Acidic residues" evidence="1">
    <location>
        <begin position="114"/>
        <end position="124"/>
    </location>
</feature>
<feature type="compositionally biased region" description="Polar residues" evidence="1">
    <location>
        <begin position="151"/>
        <end position="163"/>
    </location>
</feature>
<feature type="compositionally biased region" description="Acidic residues" evidence="1">
    <location>
        <begin position="203"/>
        <end position="225"/>
    </location>
</feature>
<feature type="compositionally biased region" description="Low complexity" evidence="1">
    <location>
        <begin position="226"/>
        <end position="237"/>
    </location>
</feature>
<feature type="compositionally biased region" description="Acidic residues" evidence="1">
    <location>
        <begin position="238"/>
        <end position="262"/>
    </location>
</feature>
<feature type="compositionally biased region" description="Basic and acidic residues" evidence="1">
    <location>
        <begin position="263"/>
        <end position="275"/>
    </location>
</feature>
<feature type="compositionally biased region" description="Basic residues" evidence="1">
    <location>
        <begin position="335"/>
        <end position="345"/>
    </location>
</feature>
<feature type="modified residue" description="Phosphoserine" evidence="10 11 12">
    <location>
        <position position="325"/>
    </location>
</feature>
<feature type="helix" evidence="14">
    <location>
        <begin position="297"/>
        <end position="299"/>
    </location>
</feature>
<feature type="turn" evidence="13">
    <location>
        <begin position="447"/>
        <end position="449"/>
    </location>
</feature>
<feature type="strand" evidence="13">
    <location>
        <begin position="453"/>
        <end position="459"/>
    </location>
</feature>
<feature type="helix" evidence="13">
    <location>
        <begin position="463"/>
        <end position="465"/>
    </location>
</feature>
<feature type="strand" evidence="13">
    <location>
        <begin position="467"/>
        <end position="470"/>
    </location>
</feature>
<feature type="strand" evidence="13">
    <location>
        <begin position="473"/>
        <end position="489"/>
    </location>
</feature>
<feature type="strand" evidence="13">
    <location>
        <begin position="492"/>
        <end position="497"/>
    </location>
</feature>
<feature type="strand" evidence="13">
    <location>
        <begin position="501"/>
        <end position="504"/>
    </location>
</feature>
<feature type="strand" evidence="13">
    <location>
        <begin position="509"/>
        <end position="514"/>
    </location>
</feature>
<feature type="strand" evidence="13">
    <location>
        <begin position="516"/>
        <end position="518"/>
    </location>
</feature>
<feature type="strand" evidence="13">
    <location>
        <begin position="520"/>
        <end position="528"/>
    </location>
</feature>
<gene>
    <name type="primary">MIF2</name>
    <name type="ordered locus">YKL089W</name>
</gene>
<keyword id="KW-0002">3D-structure</keyword>
<keyword id="KW-0131">Cell cycle</keyword>
<keyword id="KW-0132">Cell division</keyword>
<keyword id="KW-0137">Centromere</keyword>
<keyword id="KW-0158">Chromosome</keyword>
<keyword id="KW-0238">DNA-binding</keyword>
<keyword id="KW-0995">Kinetochore</keyword>
<keyword id="KW-0498">Mitosis</keyword>
<keyword id="KW-0539">Nucleus</keyword>
<keyword id="KW-0597">Phosphoprotein</keyword>
<keyword id="KW-1185">Reference proteome</keyword>
<keyword id="KW-0677">Repeat</keyword>
<dbReference type="EMBL" id="Z18294">
    <property type="protein sequence ID" value="CAA79163.1"/>
    <property type="molecule type" value="Genomic_DNA"/>
</dbReference>
<dbReference type="EMBL" id="Z28089">
    <property type="protein sequence ID" value="CAA81927.1"/>
    <property type="molecule type" value="Genomic_DNA"/>
</dbReference>
<dbReference type="EMBL" id="BK006944">
    <property type="protein sequence ID" value="DAA09069.1"/>
    <property type="molecule type" value="Genomic_DNA"/>
</dbReference>
<dbReference type="PIR" id="S37914">
    <property type="entry name" value="S37914"/>
</dbReference>
<dbReference type="RefSeq" id="NP_012834.1">
    <property type="nucleotide sequence ID" value="NM_001179655.1"/>
</dbReference>
<dbReference type="PDB" id="2VPV">
    <property type="method" value="X-ray"/>
    <property type="resolution" value="2.70 A"/>
    <property type="chains" value="A/B=365-530"/>
</dbReference>
<dbReference type="PDB" id="6QLD">
    <property type="method" value="EM"/>
    <property type="resolution" value="4.15 A"/>
    <property type="chains" value="C=284-305"/>
</dbReference>
<dbReference type="PDB" id="7ON1">
    <property type="method" value="EM"/>
    <property type="resolution" value="3.35 A"/>
    <property type="chains" value="C/D=1-549"/>
</dbReference>
<dbReference type="PDBsum" id="2VPV"/>
<dbReference type="PDBsum" id="6QLD"/>
<dbReference type="PDBsum" id="7ON1"/>
<dbReference type="EMDB" id="EMD-4579"/>
<dbReference type="SMR" id="P35201"/>
<dbReference type="BioGRID" id="34044">
    <property type="interactions" value="301"/>
</dbReference>
<dbReference type="ComplexPortal" id="CPX-2533">
    <property type="entry name" value="Kinetochore CCAN complex"/>
</dbReference>
<dbReference type="DIP" id="DIP-7297N"/>
<dbReference type="FunCoup" id="P35201">
    <property type="interactions" value="174"/>
</dbReference>
<dbReference type="IntAct" id="P35201">
    <property type="interactions" value="8"/>
</dbReference>
<dbReference type="MINT" id="P35201"/>
<dbReference type="STRING" id="4932.YKL089W"/>
<dbReference type="iPTMnet" id="P35201"/>
<dbReference type="PaxDb" id="4932-YKL089W"/>
<dbReference type="PeptideAtlas" id="P35201"/>
<dbReference type="EnsemblFungi" id="YKL089W_mRNA">
    <property type="protein sequence ID" value="YKL089W"/>
    <property type="gene ID" value="YKL089W"/>
</dbReference>
<dbReference type="GeneID" id="853773"/>
<dbReference type="KEGG" id="sce:YKL089W"/>
<dbReference type="AGR" id="SGD:S000001572"/>
<dbReference type="SGD" id="S000001572">
    <property type="gene designation" value="MIF2"/>
</dbReference>
<dbReference type="VEuPathDB" id="FungiDB:YKL089W"/>
<dbReference type="eggNOG" id="ENOG502S47H">
    <property type="taxonomic scope" value="Eukaryota"/>
</dbReference>
<dbReference type="GeneTree" id="ENSGT00390000016737"/>
<dbReference type="HOGENOM" id="CLU_038087_0_0_1"/>
<dbReference type="InParanoid" id="P35201"/>
<dbReference type="OMA" id="AKMFFVQ"/>
<dbReference type="OrthoDB" id="1939643at2759"/>
<dbReference type="BioCyc" id="YEAST:G3O-31880-MONOMER"/>
<dbReference type="BioGRID-ORCS" id="853773">
    <property type="hits" value="0 hits in 10 CRISPR screens"/>
</dbReference>
<dbReference type="EvolutionaryTrace" id="P35201"/>
<dbReference type="PRO" id="PR:P35201"/>
<dbReference type="Proteomes" id="UP000002311">
    <property type="component" value="Chromosome XI"/>
</dbReference>
<dbReference type="RNAct" id="P35201">
    <property type="molecule type" value="protein"/>
</dbReference>
<dbReference type="GO" id="GO:0000779">
    <property type="term" value="C:condensed chromosome, centromeric region"/>
    <property type="evidence" value="ECO:0000314"/>
    <property type="project" value="SGD"/>
</dbReference>
<dbReference type="GO" id="GO:0000776">
    <property type="term" value="C:kinetochore"/>
    <property type="evidence" value="ECO:0007669"/>
    <property type="project" value="UniProtKB-KW"/>
</dbReference>
<dbReference type="GO" id="GO:0005634">
    <property type="term" value="C:nucleus"/>
    <property type="evidence" value="ECO:0007669"/>
    <property type="project" value="UniProtKB-SubCell"/>
</dbReference>
<dbReference type="GO" id="GO:0019237">
    <property type="term" value="F:centromeric DNA binding"/>
    <property type="evidence" value="ECO:0000314"/>
    <property type="project" value="SGD"/>
</dbReference>
<dbReference type="GO" id="GO:0044877">
    <property type="term" value="F:protein-containing complex binding"/>
    <property type="evidence" value="ECO:0000314"/>
    <property type="project" value="SGD"/>
</dbReference>
<dbReference type="GO" id="GO:0051315">
    <property type="term" value="P:attachment of mitotic spindle microtubules to kinetochore"/>
    <property type="evidence" value="ECO:0000318"/>
    <property type="project" value="GO_Central"/>
</dbReference>
<dbReference type="GO" id="GO:0051301">
    <property type="term" value="P:cell division"/>
    <property type="evidence" value="ECO:0007669"/>
    <property type="project" value="UniProtKB-KW"/>
</dbReference>
<dbReference type="GO" id="GO:0007059">
    <property type="term" value="P:chromosome segregation"/>
    <property type="evidence" value="ECO:0000315"/>
    <property type="project" value="SGD"/>
</dbReference>
<dbReference type="GO" id="GO:0051382">
    <property type="term" value="P:kinetochore assembly"/>
    <property type="evidence" value="ECO:0000315"/>
    <property type="project" value="SGD"/>
</dbReference>
<dbReference type="GO" id="GO:0007052">
    <property type="term" value="P:mitotic spindle organization"/>
    <property type="evidence" value="ECO:0000315"/>
    <property type="project" value="SGD"/>
</dbReference>
<dbReference type="GO" id="GO:0051455">
    <property type="term" value="P:spindle attachment to meiosis I kinetochore"/>
    <property type="evidence" value="ECO:0000318"/>
    <property type="project" value="GO_Central"/>
</dbReference>
<dbReference type="CDD" id="cd06993">
    <property type="entry name" value="cupin_CENP-C_C"/>
    <property type="match status" value="1"/>
</dbReference>
<dbReference type="DisProt" id="DP02395"/>
<dbReference type="FunFam" id="2.60.120.10:FF:000033">
    <property type="entry name" value="Centromere protein C 1"/>
    <property type="match status" value="1"/>
</dbReference>
<dbReference type="Gene3D" id="2.60.120.10">
    <property type="entry name" value="Jelly Rolls"/>
    <property type="match status" value="1"/>
</dbReference>
<dbReference type="InterPro" id="IPR028386">
    <property type="entry name" value="CENP-C/Mif2/cnp3"/>
</dbReference>
<dbReference type="InterPro" id="IPR025974">
    <property type="entry name" value="Mif2/CENP-C_cupin"/>
</dbReference>
<dbReference type="InterPro" id="IPR028929">
    <property type="entry name" value="Mif2_N"/>
</dbReference>
<dbReference type="InterPro" id="IPR014710">
    <property type="entry name" value="RmlC-like_jellyroll"/>
</dbReference>
<dbReference type="PANTHER" id="PTHR16684">
    <property type="entry name" value="CENTROMERE PROTEIN C"/>
    <property type="match status" value="1"/>
</dbReference>
<dbReference type="PANTHER" id="PTHR16684:SF11">
    <property type="entry name" value="CENTROMERE PROTEIN C"/>
    <property type="match status" value="1"/>
</dbReference>
<dbReference type="Pfam" id="PF11699">
    <property type="entry name" value="CENP-C_C"/>
    <property type="match status" value="1"/>
</dbReference>
<dbReference type="Pfam" id="PF15624">
    <property type="entry name" value="Mif2_N"/>
    <property type="match status" value="1"/>
</dbReference>